<proteinExistence type="evidence at protein level"/>
<dbReference type="EC" id="2.4.1.-" evidence="12"/>
<dbReference type="EMBL" id="AY195743">
    <property type="protein sequence ID" value="AAO39815.1"/>
    <property type="molecule type" value="Genomic_DNA"/>
</dbReference>
<dbReference type="EMBL" id="KJ138908">
    <property type="protein sequence ID" value="AHL38848.1"/>
    <property type="molecule type" value="mRNA"/>
</dbReference>
<dbReference type="EMBL" id="AC006569">
    <property type="protein sequence ID" value="AAD21751.1"/>
    <property type="status" value="ALT_SEQ"/>
    <property type="molecule type" value="Genomic_DNA"/>
</dbReference>
<dbReference type="EMBL" id="CP002685">
    <property type="protein sequence ID" value="AEC06999.1"/>
    <property type="molecule type" value="Genomic_DNA"/>
</dbReference>
<dbReference type="EMBL" id="BT023734">
    <property type="protein sequence ID" value="AAZ23926.1"/>
    <property type="molecule type" value="mRNA"/>
</dbReference>
<dbReference type="EMBL" id="AK226372">
    <property type="protein sequence ID" value="BAE98519.1"/>
    <property type="molecule type" value="mRNA"/>
</dbReference>
<dbReference type="PIR" id="D84588">
    <property type="entry name" value="D84588"/>
</dbReference>
<dbReference type="RefSeq" id="NP_179627.2">
    <property type="nucleotide sequence ID" value="NM_127596.3"/>
</dbReference>
<dbReference type="BioGRID" id="1909">
    <property type="interactions" value="8"/>
</dbReference>
<dbReference type="FunCoup" id="Q7XJ98">
    <property type="interactions" value="411"/>
</dbReference>
<dbReference type="STRING" id="3702.Q7XJ98"/>
<dbReference type="CAZy" id="GT47">
    <property type="family name" value="Glycosyltransferase Family 47"/>
</dbReference>
<dbReference type="GlyCosmos" id="Q7XJ98">
    <property type="glycosylation" value="7 sites, No reported glycans"/>
</dbReference>
<dbReference type="GlyGen" id="Q7XJ98">
    <property type="glycosylation" value="7 sites"/>
</dbReference>
<dbReference type="SwissPalm" id="Q7XJ98"/>
<dbReference type="PaxDb" id="3702-AT2G20370.1"/>
<dbReference type="ProteomicsDB" id="251380"/>
<dbReference type="EnsemblPlants" id="AT2G20370.1">
    <property type="protein sequence ID" value="AT2G20370.1"/>
    <property type="gene ID" value="AT2G20370"/>
</dbReference>
<dbReference type="GeneID" id="816556"/>
<dbReference type="Gramene" id="AT2G20370.1">
    <property type="protein sequence ID" value="AT2G20370.1"/>
    <property type="gene ID" value="AT2G20370"/>
</dbReference>
<dbReference type="KEGG" id="ath:AT2G20370"/>
<dbReference type="Araport" id="AT2G20370"/>
<dbReference type="TAIR" id="AT2G20370">
    <property type="gene designation" value="MUR3"/>
</dbReference>
<dbReference type="eggNOG" id="KOG1021">
    <property type="taxonomic scope" value="Eukaryota"/>
</dbReference>
<dbReference type="HOGENOM" id="CLU_012659_2_0_1"/>
<dbReference type="InParanoid" id="Q7XJ98"/>
<dbReference type="OMA" id="RPEWDIM"/>
<dbReference type="OrthoDB" id="1924787at2759"/>
<dbReference type="PhylomeDB" id="Q7XJ98"/>
<dbReference type="BioCyc" id="ARA:AT2G20370-MONOMER"/>
<dbReference type="BioCyc" id="MetaCyc:AT2G20370-MONOMER"/>
<dbReference type="PRO" id="PR:Q7XJ98"/>
<dbReference type="Proteomes" id="UP000006548">
    <property type="component" value="Chromosome 2"/>
</dbReference>
<dbReference type="ExpressionAtlas" id="Q7XJ98">
    <property type="expression patterns" value="baseline and differential"/>
</dbReference>
<dbReference type="GO" id="GO:0005768">
    <property type="term" value="C:endosome"/>
    <property type="evidence" value="ECO:0007005"/>
    <property type="project" value="TAIR"/>
</dbReference>
<dbReference type="GO" id="GO:0005794">
    <property type="term" value="C:Golgi apparatus"/>
    <property type="evidence" value="ECO:0007005"/>
    <property type="project" value="TAIR"/>
</dbReference>
<dbReference type="GO" id="GO:0032580">
    <property type="term" value="C:Golgi cisterna membrane"/>
    <property type="evidence" value="ECO:0007669"/>
    <property type="project" value="UniProtKB-SubCell"/>
</dbReference>
<dbReference type="GO" id="GO:0000139">
    <property type="term" value="C:Golgi membrane"/>
    <property type="evidence" value="ECO:0007669"/>
    <property type="project" value="UniProtKB-SubCell"/>
</dbReference>
<dbReference type="GO" id="GO:0000138">
    <property type="term" value="C:Golgi trans cisterna"/>
    <property type="evidence" value="ECO:0007005"/>
    <property type="project" value="TAIR"/>
</dbReference>
<dbReference type="GO" id="GO:0005802">
    <property type="term" value="C:trans-Golgi network"/>
    <property type="evidence" value="ECO:0007005"/>
    <property type="project" value="TAIR"/>
</dbReference>
<dbReference type="GO" id="GO:0016757">
    <property type="term" value="F:glycosyltransferase activity"/>
    <property type="evidence" value="ECO:0000314"/>
    <property type="project" value="TAIR"/>
</dbReference>
<dbReference type="GO" id="GO:0010256">
    <property type="term" value="P:endomembrane system organization"/>
    <property type="evidence" value="ECO:0000315"/>
    <property type="project" value="TAIR"/>
</dbReference>
<dbReference type="GO" id="GO:0042353">
    <property type="term" value="P:fucose biosynthetic process"/>
    <property type="evidence" value="ECO:0000315"/>
    <property type="project" value="TAIR"/>
</dbReference>
<dbReference type="GO" id="GO:0006486">
    <property type="term" value="P:protein glycosylation"/>
    <property type="evidence" value="ECO:0007669"/>
    <property type="project" value="InterPro"/>
</dbReference>
<dbReference type="GO" id="GO:0009863">
    <property type="term" value="P:salicylic acid mediated signaling pathway"/>
    <property type="evidence" value="ECO:0000315"/>
    <property type="project" value="TAIR"/>
</dbReference>
<dbReference type="GO" id="GO:0009826">
    <property type="term" value="P:unidimensional cell growth"/>
    <property type="evidence" value="ECO:0000315"/>
    <property type="project" value="TAIR"/>
</dbReference>
<dbReference type="GO" id="GO:0009969">
    <property type="term" value="P:xyloglucan biosynthetic process"/>
    <property type="evidence" value="ECO:0000315"/>
    <property type="project" value="TAIR"/>
</dbReference>
<dbReference type="InterPro" id="IPR004263">
    <property type="entry name" value="Exostosin"/>
</dbReference>
<dbReference type="InterPro" id="IPR040911">
    <property type="entry name" value="Exostosin_GT47"/>
</dbReference>
<dbReference type="PANTHER" id="PTHR11062">
    <property type="entry name" value="EXOSTOSIN HEPARAN SULFATE GLYCOSYLTRANSFERASE -RELATED"/>
    <property type="match status" value="1"/>
</dbReference>
<dbReference type="PANTHER" id="PTHR11062:SF56">
    <property type="entry name" value="XYLOGLUCAN GALACTOSYLTRANSFERASE MUR3"/>
    <property type="match status" value="1"/>
</dbReference>
<dbReference type="Pfam" id="PF03016">
    <property type="entry name" value="Exostosin_GT47"/>
    <property type="match status" value="1"/>
</dbReference>
<accession>Q7XJ98</accession>
<accession>Q0WWH9</accession>
<accession>Q494P2</accession>
<accession>Q9SK65</accession>
<accession>W8QNZ0</accession>
<sequence length="619" mass="70744">MFPRVSMRRRSAEVSPTEPMEKGNGKNQTNRICLLVALSLFFWALLLYFHFVVLGTSNIDKQLQLQPSYAQSQPSSVSLRVDKFPIEPHAAPSKPPPKEPLVTIDKPILPPAPVANSSSTFKPPRIVESGKKQEFSFIRALKTVDNKSDPCGGKYIYVHNLPSKFNEDMLRDCKKLSLWTNMCKFTTNAGLGPPLENVEGVFSDEGWYATNQFAVDVIFSNRMKQYKCLTNDSSLAAAIFVPFYAGFDIARYLWGYNISRRDAASLELVDWLMKRPEWDIMRGKDHFLVAGRITWDFRRLSEEETDWGNKLLFLPAAKNMSMLVVESSPWNANDFGIPYPTYFHPAKDSEVFEWQDRMRNLERKWLFSFAGAPRPDNPKSIRGQIIDQCRNSNVGKLLECDFGESKCHAPSSIMQMFQSSLFCLQPQGDSYTRRSAFDSMLAGCIPVFFHPGSAYTQYTWHLPKNYTTYSVFIPEDDVRKRNISIEERLLQIPAKQVKIMRENVINLIPRLIYADPRSELETQKDAFDVSVQAVIDKVTRLRKNMIEGRTEYDYFVEENSWKYALLEEGQREAGGHVWDPFFSKPKPGEDGSSDGNGGTTISADAAKNSWKSEQRDKTQ</sequence>
<organism>
    <name type="scientific">Arabidopsis thaliana</name>
    <name type="common">Mouse-ear cress</name>
    <dbReference type="NCBI Taxonomy" id="3702"/>
    <lineage>
        <taxon>Eukaryota</taxon>
        <taxon>Viridiplantae</taxon>
        <taxon>Streptophyta</taxon>
        <taxon>Embryophyta</taxon>
        <taxon>Tracheophyta</taxon>
        <taxon>Spermatophyta</taxon>
        <taxon>Magnoliopsida</taxon>
        <taxon>eudicotyledons</taxon>
        <taxon>Gunneridae</taxon>
        <taxon>Pentapetalae</taxon>
        <taxon>rosids</taxon>
        <taxon>malvids</taxon>
        <taxon>Brassicales</taxon>
        <taxon>Brassicaceae</taxon>
        <taxon>Camelineae</taxon>
        <taxon>Arabidopsis</taxon>
    </lineage>
</organism>
<protein>
    <recommendedName>
        <fullName evidence="12">Xyloglucan galactosyltransferase MUR3</fullName>
        <ecNumber evidence="12">2.4.1.-</ecNumber>
    </recommendedName>
    <alternativeName>
        <fullName evidence="10">Protein KATAMARI</fullName>
    </alternativeName>
    <alternativeName>
        <fullName evidence="9">Protein MURUS 3</fullName>
        <shortName evidence="9">AtMUR3</shortName>
    </alternativeName>
    <alternativeName>
        <fullName evidence="11">Protein SHORT ROOT IN SALT MEDIUM 3</fullName>
    </alternativeName>
</protein>
<evidence type="ECO:0000255" key="1"/>
<evidence type="ECO:0000255" key="2">
    <source>
        <dbReference type="PROSITE-ProRule" id="PRU00498"/>
    </source>
</evidence>
<evidence type="ECO:0000256" key="3">
    <source>
        <dbReference type="SAM" id="MobiDB-lite"/>
    </source>
</evidence>
<evidence type="ECO:0000269" key="4">
    <source>
    </source>
</evidence>
<evidence type="ECO:0000269" key="5">
    <source>
    </source>
</evidence>
<evidence type="ECO:0000269" key="6">
    <source>
    </source>
</evidence>
<evidence type="ECO:0000269" key="7">
    <source>
    </source>
</evidence>
<evidence type="ECO:0000269" key="8">
    <source>
    </source>
</evidence>
<evidence type="ECO:0000303" key="9">
    <source>
    </source>
</evidence>
<evidence type="ECO:0000303" key="10">
    <source>
    </source>
</evidence>
<evidence type="ECO:0000303" key="11">
    <source>
    </source>
</evidence>
<evidence type="ECO:0000305" key="12"/>
<evidence type="ECO:0000305" key="13">
    <source>
    </source>
</evidence>
<evidence type="ECO:0000305" key="14">
    <source>
    </source>
</evidence>
<feature type="chain" id="PRO_0000149667" description="Xyloglucan galactosyltransferase MUR3">
    <location>
        <begin position="1"/>
        <end position="619"/>
    </location>
</feature>
<feature type="topological domain" description="Cytoplasmic" evidence="13">
    <location>
        <begin position="1"/>
        <end position="33"/>
    </location>
</feature>
<feature type="transmembrane region" description="Helical; Signal-anchor for type II membrane protein" evidence="1">
    <location>
        <begin position="34"/>
        <end position="54"/>
    </location>
</feature>
<feature type="topological domain" description="Lumenal" evidence="13">
    <location>
        <begin position="55"/>
        <end position="619"/>
    </location>
</feature>
<feature type="region of interest" description="Disordered" evidence="3">
    <location>
        <begin position="1"/>
        <end position="26"/>
    </location>
</feature>
<feature type="region of interest" description="Disordered" evidence="3">
    <location>
        <begin position="576"/>
        <end position="619"/>
    </location>
</feature>
<feature type="compositionally biased region" description="Basic and acidic residues" evidence="3">
    <location>
        <begin position="610"/>
        <end position="619"/>
    </location>
</feature>
<feature type="glycosylation site" description="N-linked (GlcNAc...) asparagine" evidence="2">
    <location>
        <position position="116"/>
    </location>
</feature>
<feature type="glycosylation site" description="N-linked (GlcNAc...) asparagine" evidence="2">
    <location>
        <position position="146"/>
    </location>
</feature>
<feature type="glycosylation site" description="N-linked (GlcNAc...) asparagine" evidence="2">
    <location>
        <position position="231"/>
    </location>
</feature>
<feature type="glycosylation site" description="N-linked (GlcNAc...) asparagine" evidence="2">
    <location>
        <position position="257"/>
    </location>
</feature>
<feature type="glycosylation site" description="N-linked (GlcNAc...) asparagine" evidence="2">
    <location>
        <position position="319"/>
    </location>
</feature>
<feature type="glycosylation site" description="N-linked (GlcNAc...) asparagine" evidence="2">
    <location>
        <position position="465"/>
    </location>
</feature>
<feature type="glycosylation site" description="N-linked (GlcNAc...) asparagine" evidence="2">
    <location>
        <position position="482"/>
    </location>
</feature>
<feature type="mutagenesis site" description="In mur3-2; altered xyloglucan, but normal endomembrane organization." evidence="4">
    <original>A</original>
    <variation>V</variation>
    <location>
        <position position="290"/>
    </location>
</feature>
<feature type="mutagenesis site" description="In mur3-1; altered xyloglucan, but normal endomembrane organization. In mur3-5 and cie1; stunted growth; when associated with I-539." evidence="4 6">
    <original>S</original>
    <variation>L</variation>
    <location>
        <position position="470"/>
    </location>
</feature>
<feature type="mutagenesis site" description="In mur3-5 and cie1; stunted growth; when associated with L-470." evidence="6">
    <original>T</original>
    <variation>I</variation>
    <location>
        <position position="539"/>
    </location>
</feature>
<feature type="sequence conflict" description="In Ref. 6; BAE98519." evidence="12" ref="6">
    <original>E</original>
    <variation>G</variation>
    <location>
        <position position="87"/>
    </location>
</feature>
<keyword id="KW-0325">Glycoprotein</keyword>
<keyword id="KW-0328">Glycosyltransferase</keyword>
<keyword id="KW-0333">Golgi apparatus</keyword>
<keyword id="KW-0472">Membrane</keyword>
<keyword id="KW-1185">Reference proteome</keyword>
<keyword id="KW-0735">Signal-anchor</keyword>
<keyword id="KW-0346">Stress response</keyword>
<keyword id="KW-0808">Transferase</keyword>
<keyword id="KW-0812">Transmembrane</keyword>
<keyword id="KW-1133">Transmembrane helix</keyword>
<name>MUR3_ARATH</name>
<reference key="1">
    <citation type="journal article" date="2003" name="Plant Cell">
        <title>The MUR3 gene of Arabidopsis encodes a xyloglucan galactosyltransferase that is evolutionarily related to animal exostosins.</title>
        <authorList>
            <person name="Madson M."/>
            <person name="Dunand C."/>
            <person name="Li X."/>
            <person name="Verma R."/>
            <person name="Vanzin G.F."/>
            <person name="Caplan J."/>
            <person name="Shoue D.A."/>
            <person name="Carpita N.C."/>
            <person name="Reiter W.-D."/>
        </authorList>
    </citation>
    <scope>NUCLEOTIDE SEQUENCE [GENOMIC DNA]</scope>
    <scope>FUNCTION</scope>
    <scope>MUTAGENESIS OF ALA-290 AND SER-470</scope>
    <scope>TISSUE SPECIFICITY</scope>
</reference>
<reference key="2">
    <citation type="journal article" date="2014" name="Plant J.">
        <title>The plant glycosyltransferase clone collection for functional genomics.</title>
        <authorList>
            <person name="Lao J."/>
            <person name="Oikawa A."/>
            <person name="Bromley J.R."/>
            <person name="McInerney P."/>
            <person name="Suttangkakul A."/>
            <person name="Smith-Moritz A.M."/>
            <person name="Plahar H."/>
            <person name="Chiu T.-Y."/>
            <person name="Gonzalez Fernandez-Nino S.M.G."/>
            <person name="Ebert B."/>
            <person name="Yang F."/>
            <person name="Christiansen K.M."/>
            <person name="Hansen S.F."/>
            <person name="Stonebloom S."/>
            <person name="Adams P.D."/>
            <person name="Ronald P.C."/>
            <person name="Hillson N.J."/>
            <person name="Hadi M.Z."/>
            <person name="Vega-Sanchez M.E."/>
            <person name="Loque D."/>
            <person name="Scheller H.V."/>
            <person name="Heazlewood J.L."/>
        </authorList>
    </citation>
    <scope>NUCLEOTIDE SEQUENCE [MRNA]</scope>
    <source>
        <strain>cv. Columbia</strain>
    </source>
</reference>
<reference key="3">
    <citation type="journal article" date="1999" name="Nature">
        <title>Sequence and analysis of chromosome 2 of the plant Arabidopsis thaliana.</title>
        <authorList>
            <person name="Lin X."/>
            <person name="Kaul S."/>
            <person name="Rounsley S.D."/>
            <person name="Shea T.P."/>
            <person name="Benito M.-I."/>
            <person name="Town C.D."/>
            <person name="Fujii C.Y."/>
            <person name="Mason T.M."/>
            <person name="Bowman C.L."/>
            <person name="Barnstead M.E."/>
            <person name="Feldblyum T.V."/>
            <person name="Buell C.R."/>
            <person name="Ketchum K.A."/>
            <person name="Lee J.J."/>
            <person name="Ronning C.M."/>
            <person name="Koo H.L."/>
            <person name="Moffat K.S."/>
            <person name="Cronin L.A."/>
            <person name="Shen M."/>
            <person name="Pai G."/>
            <person name="Van Aken S."/>
            <person name="Umayam L."/>
            <person name="Tallon L.J."/>
            <person name="Gill J.E."/>
            <person name="Adams M.D."/>
            <person name="Carrera A.J."/>
            <person name="Creasy T.H."/>
            <person name="Goodman H.M."/>
            <person name="Somerville C.R."/>
            <person name="Copenhaver G.P."/>
            <person name="Preuss D."/>
            <person name="Nierman W.C."/>
            <person name="White O."/>
            <person name="Eisen J.A."/>
            <person name="Salzberg S.L."/>
            <person name="Fraser C.M."/>
            <person name="Venter J.C."/>
        </authorList>
    </citation>
    <scope>NUCLEOTIDE SEQUENCE [LARGE SCALE GENOMIC DNA]</scope>
    <source>
        <strain>cv. Columbia</strain>
    </source>
</reference>
<reference key="4">
    <citation type="journal article" date="2017" name="Plant J.">
        <title>Araport11: a complete reannotation of the Arabidopsis thaliana reference genome.</title>
        <authorList>
            <person name="Cheng C.Y."/>
            <person name="Krishnakumar V."/>
            <person name="Chan A.P."/>
            <person name="Thibaud-Nissen F."/>
            <person name="Schobel S."/>
            <person name="Town C.D."/>
        </authorList>
    </citation>
    <scope>GENOME REANNOTATION</scope>
    <source>
        <strain>cv. Columbia</strain>
    </source>
</reference>
<reference key="5">
    <citation type="submission" date="2005-07" db="EMBL/GenBank/DDBJ databases">
        <title>Arabidopsis ORF clones.</title>
        <authorList>
            <person name="Cheuk R.F."/>
            <person name="Chen H."/>
            <person name="Kim C.J."/>
            <person name="Shinn P."/>
            <person name="Ecker J.R."/>
        </authorList>
    </citation>
    <scope>NUCLEOTIDE SEQUENCE [LARGE SCALE MRNA]</scope>
    <source>
        <strain>cv. Columbia</strain>
    </source>
</reference>
<reference key="6">
    <citation type="submission" date="2006-07" db="EMBL/GenBank/DDBJ databases">
        <title>Large-scale analysis of RIKEN Arabidopsis full-length (RAFL) cDNAs.</title>
        <authorList>
            <person name="Totoki Y."/>
            <person name="Seki M."/>
            <person name="Ishida J."/>
            <person name="Nakajima M."/>
            <person name="Enju A."/>
            <person name="Kamiya A."/>
            <person name="Narusaka M."/>
            <person name="Shin-i T."/>
            <person name="Nakagawa M."/>
            <person name="Sakamoto N."/>
            <person name="Oishi K."/>
            <person name="Kohara Y."/>
            <person name="Kobayashi M."/>
            <person name="Toyoda A."/>
            <person name="Sakaki Y."/>
            <person name="Sakurai T."/>
            <person name="Iida K."/>
            <person name="Akiyama K."/>
            <person name="Satou M."/>
            <person name="Toyoda T."/>
            <person name="Konagaya A."/>
            <person name="Carninci P."/>
            <person name="Kawai J."/>
            <person name="Hayashizaki Y."/>
            <person name="Shinozaki K."/>
        </authorList>
    </citation>
    <scope>NUCLEOTIDE SEQUENCE [LARGE SCALE MRNA]</scope>
    <source>
        <strain>cv. Columbia</strain>
    </source>
</reference>
<reference key="7">
    <citation type="journal article" date="2004" name="Plant Physiol.">
        <title>Molecular analysis of 10 coding regions from Arabidopsis that are homologous to the MUR3 xyloglucan galactosyltransferase.</title>
        <authorList>
            <person name="Li X."/>
            <person name="Cordero I."/>
            <person name="Caplan J."/>
            <person name="Moelhoej M."/>
            <person name="Reiter W.D."/>
        </authorList>
    </citation>
    <scope>TISSUE SPECIFICITY</scope>
</reference>
<reference key="8">
    <citation type="journal article" date="2005" name="Plant Cell">
        <title>KATAMARI1/MURUS3 is a novel Golgi membrane protein that is required for endomembrane organization in Arabidopsis.</title>
        <authorList>
            <person name="Tamura K."/>
            <person name="Shimada T."/>
            <person name="Kondo M."/>
            <person name="Nishimura M."/>
            <person name="Hara-Nishimura I."/>
        </authorList>
    </citation>
    <scope>FUNCTION</scope>
    <scope>SUBCELLULAR LOCATION</scope>
    <scope>TOPOLOGY</scope>
    <scope>DISRUPTION PHENOTYPE</scope>
</reference>
<reference key="9">
    <citation type="journal article" date="2008" name="Plant J.">
        <title>Characterization of Arabidopsis mur3 mutations that result in constitutive activation of defence in petioles, but not leaves.</title>
        <authorList>
            <person name="Tedman-Jones J.D."/>
            <person name="Lei R."/>
            <person name="Jay F."/>
            <person name="Fabro G."/>
            <person name="Li X."/>
            <person name="Reiter W.D."/>
            <person name="Brearley C."/>
            <person name="Jones J.D."/>
        </authorList>
    </citation>
    <scope>MUTAGENESIS OF SER-470 AND THR-539</scope>
</reference>
<reference key="10">
    <citation type="journal article" date="2013" name="Mol. Plant">
        <title>A bi-functional xyloglucan galactosyltransferase is an indispensable salt stress tolerance determinant in Arabidopsis.</title>
        <authorList>
            <person name="Li W."/>
            <person name="Guan Q."/>
            <person name="Wang Z.Y."/>
            <person name="Wang Y."/>
            <person name="Zhu J."/>
        </authorList>
    </citation>
    <scope>FUNCTION</scope>
    <scope>INDUCTION BY SALT STRESS</scope>
    <scope>DISRUPTION PHENOTYPE</scope>
</reference>
<reference key="11">
    <citation type="journal article" date="2015" name="Plant Cell Physiol.">
        <title>Protein-protein interactions among xyloglucan-synthesizing enzymes and formation of Golgi-localized multiprotein complexes.</title>
        <authorList>
            <person name="Chou Y.H."/>
            <person name="Pogorelko G."/>
            <person name="Young Z.T."/>
            <person name="Zabotina O.A."/>
        </authorList>
    </citation>
    <scope>FUNCTION</scope>
    <scope>INTERACTION WITH CSLC4 AND FUT1</scope>
    <scope>SUBCELLULAR LOCATION</scope>
</reference>
<comment type="function">
    <text evidence="4 5 7 8">Involved in the attachment of the Gal residue on the third xylosyl unit within the XXXG core structure of xyloglucan, the principal glycan that interlaces the cellulose microfibrils in plant cell wall (PubMed:12837954). Associates with other xyloglucan-synthesizing enzymes to form multiprotein complexes for xyloglucan synthesis in the Golgi (PubMed:25392066). Interacts with actin and is required for the proper endomembrane organization and for the cell elongation. Not involved in the trafficking from the endoplasmic reticulum to the vacuoles (PubMed:15863516). Involved in salt stress tolerance. Participates in the control of the expression of genes encoding for proteins involved in reactive oxygen species (ROS) detoxification under salt stress. May contribute to the maintenance of the proper organization of actin microfilaments during salt stress-induced ROS production (PubMed:23571490).</text>
</comment>
<comment type="subunit">
    <text evidence="8">Interacts with CSLC4 and FUT1.</text>
</comment>
<comment type="subcellular location">
    <subcellularLocation>
        <location evidence="5">Golgi apparatus</location>
        <location evidence="5">Golgi stack membrane</location>
        <topology evidence="13">Single-pass type II membrane protein</topology>
    </subcellularLocation>
    <subcellularLocation>
        <location evidence="8">Golgi apparatus membrane</location>
        <topology evidence="14">Single-pass type II membrane protein</topology>
    </subcellularLocation>
</comment>
<comment type="tissue specificity">
    <text evidence="4">Ubiquitous.</text>
</comment>
<comment type="induction">
    <text evidence="7">By salt stress.</text>
</comment>
<comment type="domain">
    <text evidence="5">The cytoplasmic N-terminal domain interacts with actin, while the lumenal C-terminal domain contributes to the activity of xyloglucan galactosyltransferase.</text>
</comment>
<comment type="disruption phenotype">
    <text evidence="5 7">Stunted growth.</text>
</comment>
<comment type="similarity">
    <text evidence="12">Belongs to the glycosyltransferase 47 family.</text>
</comment>
<comment type="sequence caution" evidence="12">
    <conflict type="erroneous gene model prediction">
        <sequence resource="EMBL-CDS" id="AAD21751"/>
    </conflict>
</comment>
<gene>
    <name evidence="9" type="primary">MUR3</name>
    <name evidence="10" type="synonym">KAM1</name>
    <name evidence="11" type="synonym">RSA3</name>
    <name type="ordered locus">At2g20370</name>
    <name type="ORF">F11A3.8</name>
</gene>